<comment type="function">
    <text>May be involved in metabolism of dipeptides or may affect host defense mechanisms. Has a substrate specificity limited to the hydrolysis of X-Ala, His-Ser, and Ser-Tyr dipeptides at a neutral pH optimum.</text>
</comment>
<comment type="biophysicochemical properties">
    <phDependence>
        <text>Optimum pH is 6.5.</text>
    </phDependence>
</comment>
<comment type="subcellular location">
    <subcellularLocation>
        <location>Secreted</location>
    </subcellularLocation>
</comment>
<comment type="tissue specificity">
    <text>Expressed in mycelia and conidia.</text>
</comment>
<comment type="PTM">
    <text>N-glycosylated.</text>
</comment>
<comment type="similarity">
    <text evidence="5">Belongs to the peptidase S9C family.</text>
</comment>
<keyword id="KW-0903">Direct protein sequencing</keyword>
<keyword id="KW-0325">Glycoprotein</keyword>
<keyword id="KW-0378">Hydrolase</keyword>
<keyword id="KW-0645">Protease</keyword>
<keyword id="KW-0964">Secreted</keyword>
<keyword id="KW-0720">Serine protease</keyword>
<keyword id="KW-0732">Signal</keyword>
<evidence type="ECO:0000250" key="1"/>
<evidence type="ECO:0000255" key="2"/>
<evidence type="ECO:0000256" key="3">
    <source>
        <dbReference type="SAM" id="MobiDB-lite"/>
    </source>
</evidence>
<evidence type="ECO:0000269" key="4">
    <source>
    </source>
</evidence>
<evidence type="ECO:0000305" key="5"/>
<gene>
    <name type="ORF">AFUB_024920</name>
</gene>
<dbReference type="EC" id="3.4.14.-"/>
<dbReference type="EMBL" id="L48074">
    <property type="protein sequence ID" value="AAB67282.1"/>
    <property type="molecule type" value="Genomic_DNA"/>
</dbReference>
<dbReference type="EMBL" id="DS499595">
    <property type="protein sequence ID" value="EDP54436.1"/>
    <property type="molecule type" value="Genomic_DNA"/>
</dbReference>
<dbReference type="SMR" id="B0XRV0"/>
<dbReference type="Allergome" id="8984">
    <property type="allergen name" value="Asp f DPPV"/>
</dbReference>
<dbReference type="ESTHER" id="aspfc-dpp5">
    <property type="family name" value="Prolyl_oligopeptidase_S9"/>
</dbReference>
<dbReference type="MEROPS" id="S09.012"/>
<dbReference type="EnsemblFungi" id="EDP54436">
    <property type="protein sequence ID" value="EDP54436"/>
    <property type="gene ID" value="AFUB_024920"/>
</dbReference>
<dbReference type="VEuPathDB" id="FungiDB:AFUB_024920"/>
<dbReference type="HOGENOM" id="CLU_008615_0_1_1"/>
<dbReference type="OrthoDB" id="18150at5052"/>
<dbReference type="PhylomeDB" id="B0XRV0"/>
<dbReference type="Proteomes" id="UP000001699">
    <property type="component" value="Unassembled WGS sequence"/>
</dbReference>
<dbReference type="GO" id="GO:0005576">
    <property type="term" value="C:extracellular region"/>
    <property type="evidence" value="ECO:0007669"/>
    <property type="project" value="UniProtKB-SubCell"/>
</dbReference>
<dbReference type="GO" id="GO:0004252">
    <property type="term" value="F:serine-type endopeptidase activity"/>
    <property type="evidence" value="ECO:0007669"/>
    <property type="project" value="TreeGrafter"/>
</dbReference>
<dbReference type="GO" id="GO:0006508">
    <property type="term" value="P:proteolysis"/>
    <property type="evidence" value="ECO:0007669"/>
    <property type="project" value="UniProtKB-KW"/>
</dbReference>
<dbReference type="FunFam" id="2.120.10.30:FF:000109">
    <property type="entry name" value="Dipeptidyl-peptidase 5"/>
    <property type="match status" value="1"/>
</dbReference>
<dbReference type="FunFam" id="3.40.50.1820:FF:000028">
    <property type="entry name" value="S9 family peptidase"/>
    <property type="match status" value="1"/>
</dbReference>
<dbReference type="Gene3D" id="3.40.50.1820">
    <property type="entry name" value="alpha/beta hydrolase"/>
    <property type="match status" value="1"/>
</dbReference>
<dbReference type="Gene3D" id="2.120.10.30">
    <property type="entry name" value="TolB, C-terminal domain"/>
    <property type="match status" value="1"/>
</dbReference>
<dbReference type="InterPro" id="IPR011042">
    <property type="entry name" value="6-blade_b-propeller_TolB-like"/>
</dbReference>
<dbReference type="InterPro" id="IPR029058">
    <property type="entry name" value="AB_hydrolase_fold"/>
</dbReference>
<dbReference type="InterPro" id="IPR011659">
    <property type="entry name" value="PD40"/>
</dbReference>
<dbReference type="InterPro" id="IPR001375">
    <property type="entry name" value="Peptidase_S9_cat"/>
</dbReference>
<dbReference type="PANTHER" id="PTHR42776:SF11">
    <property type="entry name" value="DIPEPTIDYL-PEPTIDASE 5-RELATED"/>
    <property type="match status" value="1"/>
</dbReference>
<dbReference type="PANTHER" id="PTHR42776">
    <property type="entry name" value="SERINE PEPTIDASE S9 FAMILY MEMBER"/>
    <property type="match status" value="1"/>
</dbReference>
<dbReference type="Pfam" id="PF07676">
    <property type="entry name" value="PD40"/>
    <property type="match status" value="1"/>
</dbReference>
<dbReference type="Pfam" id="PF00326">
    <property type="entry name" value="Peptidase_S9"/>
    <property type="match status" value="1"/>
</dbReference>
<dbReference type="SUPFAM" id="SSF53474">
    <property type="entry name" value="alpha/beta-Hydrolases"/>
    <property type="match status" value="1"/>
</dbReference>
<dbReference type="SUPFAM" id="SSF82171">
    <property type="entry name" value="DPP6 N-terminal domain-like"/>
    <property type="match status" value="1"/>
</dbReference>
<sequence>MGAFRWLSIAAAASTALALTPEQLITAPRRSEAIPDPSGKVAVFSTSQYSFETHKRTSWWSLLDLKTGQTKVLTNDSSVSEIVWLSDDSILYVNSTNADIPGGVELWVTQASSFAKGYKAASLPASFSGLKAAKTKSGDIRFVAYGQSYPNGTAYNEELATAPLSSARIYDSIYVRHWDYWLSTTFNAVFSGTLKKGHGKNGYSLDGELKNLVSPVKNAESPYPPFGGASDYDLSPDGKWVAFKSKAPELPKANFTTSYIYLVPHDASETARPINGPDSPGTPKGIKGDSSSPVFSPNGDKLAYFQMRDETYESDRRVLYVYSLGSKKTIPSVAGDWDRSPDSVKWTPDGKTLIVGSEDLGRTRLFSLPANAKDDYKPKNFTDGGSVSAYYFLPDSSLLVTGSALWTNWNVYTAKPEKGVIKKIASANEIDPELKGLGPSDISEFYFQGNFTDIHAWVIYPENFDKSKKYPLIFFIHGGPQGNWADGWSTRWNPKAWADQGYVVVAPNPTGSTGFGQALTDAIQNNWGGAPYDDLVKCWEYVHENLDYVDTDHGVAAGASYGGFMINWIQGSPLGRKFKALVSHDGTFVADAKVSTEELWFMQREFNGTFWDARDNYRRWDPSAPERILQFATPMLVIHSDKDYRLPVAEGLSLFNVLQERGVPSRFLNFPDENHWVVNPENSLVWHQQALGWINKYSGVEKSNPNAVSLEDTVVPVVNYN</sequence>
<protein>
    <recommendedName>
        <fullName>Dipeptidyl-peptidase 5</fullName>
        <ecNumber>3.4.14.-</ecNumber>
    </recommendedName>
    <alternativeName>
        <fullName>Dipeptidyl-peptidase V</fullName>
        <shortName>DPP V</shortName>
        <shortName>DppV</shortName>
    </alternativeName>
</protein>
<reference key="1">
    <citation type="journal article" date="1997" name="J. Biol. Chem.">
        <title>Biochemical and antigenic characterization of a new dipeptidyl-peptidase isolated from Aspergillus fumigatus.</title>
        <authorList>
            <person name="Beauvais A."/>
            <person name="Monod M."/>
            <person name="Debeaupuis J.-P."/>
            <person name="Diaquin M."/>
            <person name="Kobayashi H."/>
            <person name="Latge J.-P."/>
        </authorList>
    </citation>
    <scope>NUCLEOTIDE SEQUENCE [GENOMIC DNA]</scope>
    <scope>PROTEIN SEQUENCE OF 19-42; 435-448 AND 593-603</scope>
    <scope>CHARACTERIZATION</scope>
</reference>
<reference key="2">
    <citation type="journal article" date="2008" name="PLoS Genet.">
        <title>Genomic islands in the pathogenic filamentous fungus Aspergillus fumigatus.</title>
        <authorList>
            <person name="Fedorova N.D."/>
            <person name="Khaldi N."/>
            <person name="Joardar V.S."/>
            <person name="Maiti R."/>
            <person name="Amedeo P."/>
            <person name="Anderson M.J."/>
            <person name="Crabtree J."/>
            <person name="Silva J.C."/>
            <person name="Badger J.H."/>
            <person name="Albarraq A."/>
            <person name="Angiuoli S."/>
            <person name="Bussey H."/>
            <person name="Bowyer P."/>
            <person name="Cotty P.J."/>
            <person name="Dyer P.S."/>
            <person name="Egan A."/>
            <person name="Galens K."/>
            <person name="Fraser-Liggett C.M."/>
            <person name="Haas B.J."/>
            <person name="Inman J.M."/>
            <person name="Kent R."/>
            <person name="Lemieux S."/>
            <person name="Malavazi I."/>
            <person name="Orvis J."/>
            <person name="Roemer T."/>
            <person name="Ronning C.M."/>
            <person name="Sundaram J.P."/>
            <person name="Sutton G."/>
            <person name="Turner G."/>
            <person name="Venter J.C."/>
            <person name="White O.R."/>
            <person name="Whitty B.R."/>
            <person name="Youngman P."/>
            <person name="Wolfe K.H."/>
            <person name="Goldman G.H."/>
            <person name="Wortman J.R."/>
            <person name="Jiang B."/>
            <person name="Denning D.W."/>
            <person name="Nierman W.C."/>
        </authorList>
    </citation>
    <scope>NUCLEOTIDE SEQUENCE [LARGE SCALE GENOMIC DNA]</scope>
    <source>
        <strain>CBS 144.89 / FGSC A1163 / CEA10</strain>
    </source>
</reference>
<feature type="signal peptide" evidence="4">
    <location>
        <begin position="1"/>
        <end position="18"/>
    </location>
</feature>
<feature type="chain" id="PRO_0000372615" description="Dipeptidyl-peptidase 5">
    <location>
        <begin position="19"/>
        <end position="721"/>
    </location>
</feature>
<feature type="region of interest" description="Disordered" evidence="3">
    <location>
        <begin position="271"/>
        <end position="297"/>
    </location>
</feature>
<feature type="active site" description="Charge relay system" evidence="1">
    <location>
        <position position="560"/>
    </location>
</feature>
<feature type="active site" description="Charge relay system" evidence="1">
    <location>
        <position position="643"/>
    </location>
</feature>
<feature type="active site" description="Charge relay system" evidence="1">
    <location>
        <position position="675"/>
    </location>
</feature>
<feature type="glycosylation site" description="N-linked (GlcNAc...) asparagine" evidence="2">
    <location>
        <position position="75"/>
    </location>
</feature>
<feature type="glycosylation site" description="N-linked (GlcNAc...) asparagine" evidence="2">
    <location>
        <position position="94"/>
    </location>
</feature>
<feature type="glycosylation site" description="N-linked (GlcNAc...) asparagine" evidence="2">
    <location>
        <position position="151"/>
    </location>
</feature>
<feature type="glycosylation site" description="N-linked (GlcNAc...) asparagine" evidence="2">
    <location>
        <position position="254"/>
    </location>
</feature>
<feature type="glycosylation site" description="N-linked (GlcNAc...) asparagine" evidence="2">
    <location>
        <position position="380"/>
    </location>
</feature>
<feature type="glycosylation site" description="N-linked (GlcNAc...) asparagine" evidence="2">
    <location>
        <position position="450"/>
    </location>
</feature>
<feature type="glycosylation site" description="N-linked (GlcNAc...) asparagine" evidence="2">
    <location>
        <position position="607"/>
    </location>
</feature>
<feature type="sequence conflict" description="In Ref. 1; AAB67282." evidence="5" ref="1">
    <original>RV</original>
    <variation>AL</variation>
    <location>
        <begin position="317"/>
        <end position="318"/>
    </location>
</feature>
<feature type="sequence conflict" description="In Ref. 1; AAB67282." evidence="5" ref="1">
    <original>D</original>
    <variation>T</variation>
    <location>
        <position position="521"/>
    </location>
</feature>
<name>DPP5_ASPFC</name>
<proteinExistence type="evidence at protein level"/>
<accession>B0XRV0</accession>
<accession>O13479</accession>
<accession>Q4X1R6</accession>
<organism>
    <name type="scientific">Aspergillus fumigatus (strain CBS 144.89 / FGSC A1163 / CEA10)</name>
    <name type="common">Neosartorya fumigata</name>
    <dbReference type="NCBI Taxonomy" id="451804"/>
    <lineage>
        <taxon>Eukaryota</taxon>
        <taxon>Fungi</taxon>
        <taxon>Dikarya</taxon>
        <taxon>Ascomycota</taxon>
        <taxon>Pezizomycotina</taxon>
        <taxon>Eurotiomycetes</taxon>
        <taxon>Eurotiomycetidae</taxon>
        <taxon>Eurotiales</taxon>
        <taxon>Aspergillaceae</taxon>
        <taxon>Aspergillus</taxon>
        <taxon>Aspergillus subgen. Fumigati</taxon>
    </lineage>
</organism>